<dbReference type="EMBL" id="CP000077">
    <property type="protein sequence ID" value="AAY80819.1"/>
    <property type="molecule type" value="Genomic_DNA"/>
</dbReference>
<dbReference type="RefSeq" id="WP_011278321.1">
    <property type="nucleotide sequence ID" value="NC_007181.1"/>
</dbReference>
<dbReference type="STRING" id="330779.Saci_1498"/>
<dbReference type="GeneID" id="14551996"/>
<dbReference type="KEGG" id="sai:Saci_1498"/>
<dbReference type="PATRIC" id="fig|330779.12.peg.1444"/>
<dbReference type="eggNOG" id="arCOG01875">
    <property type="taxonomic scope" value="Archaea"/>
</dbReference>
<dbReference type="HOGENOM" id="CLU_107444_0_0_2"/>
<dbReference type="Proteomes" id="UP000001018">
    <property type="component" value="Chromosome"/>
</dbReference>
<dbReference type="GO" id="GO:0005524">
    <property type="term" value="F:ATP binding"/>
    <property type="evidence" value="ECO:0007669"/>
    <property type="project" value="UniProtKB-KW"/>
</dbReference>
<dbReference type="GO" id="GO:0016301">
    <property type="term" value="F:kinase activity"/>
    <property type="evidence" value="ECO:0007669"/>
    <property type="project" value="UniProtKB-KW"/>
</dbReference>
<dbReference type="CDD" id="cd16400">
    <property type="entry name" value="ParB_Srx_like_nuclease"/>
    <property type="match status" value="1"/>
</dbReference>
<dbReference type="Gene3D" id="3.30.1760.10">
    <property type="entry name" value="Conserved hypothetical protein from pyrococcus furiosus pfu- 392566-001, domain 2"/>
    <property type="match status" value="1"/>
</dbReference>
<dbReference type="Gene3D" id="3.90.1530.10">
    <property type="entry name" value="Conserved hypothetical protein from pyrococcus furiosus pfu- 392566-001, ParB domain"/>
    <property type="match status" value="1"/>
</dbReference>
<dbReference type="InterPro" id="IPR003115">
    <property type="entry name" value="ParB/Sulfiredoxin_dom"/>
</dbReference>
<dbReference type="InterPro" id="IPR036086">
    <property type="entry name" value="ParB/Sulfiredoxin_sf"/>
</dbReference>
<dbReference type="InterPro" id="IPR023098">
    <property type="entry name" value="SerK/SbnI_C"/>
</dbReference>
<dbReference type="Pfam" id="PF02195">
    <property type="entry name" value="ParBc"/>
    <property type="match status" value="1"/>
</dbReference>
<dbReference type="SMART" id="SM00470">
    <property type="entry name" value="ParB"/>
    <property type="match status" value="1"/>
</dbReference>
<dbReference type="SUPFAM" id="SSF110849">
    <property type="entry name" value="ParB/Sulfiredoxin"/>
    <property type="match status" value="1"/>
</dbReference>
<keyword id="KW-0067">ATP-binding</keyword>
<keyword id="KW-0227">DNA damage</keyword>
<keyword id="KW-0418">Kinase</keyword>
<keyword id="KW-0547">Nucleotide-binding</keyword>
<keyword id="KW-1185">Reference proteome</keyword>
<keyword id="KW-0808">Transferase</keyword>
<evidence type="ECO:0000269" key="1">
    <source>
    </source>
</evidence>
<evidence type="ECO:0000305" key="2"/>
<evidence type="ECO:0000305" key="3">
    <source>
    </source>
</evidence>
<evidence type="ECO:0000312" key="4">
    <source>
        <dbReference type="EMBL" id="AAY80819.1"/>
    </source>
</evidence>
<organism>
    <name type="scientific">Sulfolobus acidocaldarius (strain ATCC 33909 / DSM 639 / JCM 8929 / NBRC 15157 / NCIMB 11770)</name>
    <dbReference type="NCBI Taxonomy" id="330779"/>
    <lineage>
        <taxon>Archaea</taxon>
        <taxon>Thermoproteota</taxon>
        <taxon>Thermoprotei</taxon>
        <taxon>Sulfolobales</taxon>
        <taxon>Sulfolobaceae</taxon>
        <taxon>Sulfolobus</taxon>
    </lineage>
</organism>
<proteinExistence type="inferred from homology"/>
<gene>
    <name evidence="4" type="ordered locus">Saci_1498</name>
</gene>
<sequence>MSNYQLEWVSPKQLRPHEDVILSIVNENIEILRKDNSMAPIIVDKNSMVILDGHHRYYASLSLGLPKIPAIMIDYNSEQVEVREWNRIIAPDSSIRDFLRVFRSSVDGKYCVSYKSDVVFCDDNIYSLYWKEEAIEQLLSRMGYNVVKTADQEATISIPPVPKNVVIDFSYKGLRFPPKSTRHIYHFYIPKQRIILQWD</sequence>
<name>Y1498_SULAC</name>
<protein>
    <recommendedName>
        <fullName evidence="2">ParB-like protein Saci_1498</fullName>
    </recommendedName>
</protein>
<comment type="function">
    <text evidence="3">Probably part of a 4-gene DNA damage response locus in which the upstream ups system, in combination with this downstream locus, functions in homologous recombination to rescue Sulfolobales from DNA-damaging threats. This protein might function in the DNA transfer machinery.</text>
</comment>
<comment type="disruption phenotype">
    <text evidence="1">Cells grow a little slower and form smaller colonies than wild-type, reduced survival after UV treatment. Cells undergo almost no recombination in mating reactions.</text>
</comment>
<comment type="similarity">
    <text evidence="2">Belongs to the ParB family.</text>
</comment>
<accession>Q4J8R0</accession>
<feature type="chain" id="PRO_0000462450" description="ParB-like protein Saci_1498">
    <location>
        <begin position="1"/>
        <end position="199"/>
    </location>
</feature>
<reference evidence="4" key="1">
    <citation type="journal article" date="2005" name="J. Bacteriol.">
        <title>The genome of Sulfolobus acidocaldarius, a model organism of the Crenarchaeota.</title>
        <authorList>
            <person name="Chen L."/>
            <person name="Bruegger K."/>
            <person name="Skovgaard M."/>
            <person name="Redder P."/>
            <person name="She Q."/>
            <person name="Torarinsson E."/>
            <person name="Greve B."/>
            <person name="Awayez M."/>
            <person name="Zibat A."/>
            <person name="Klenk H.-P."/>
            <person name="Garrett R.A."/>
        </authorList>
    </citation>
    <scope>NUCLEOTIDE SEQUENCE [LARGE SCALE GENOMIC DNA]</scope>
    <source>
        <strain>ATCC 33909 / DSM 639 / JCM 8929 / NBRC 15157 / NCIMB 11770</strain>
    </source>
</reference>
<reference key="2">
    <citation type="journal article" date="2015" name="J. Bacteriol.">
        <title>DNA Processing Proteins Involved in the UV-Induced Stress Response of Sulfolobales.</title>
        <authorList>
            <person name="van Wolferen M."/>
            <person name="Ma X."/>
            <person name="Albers S.V."/>
        </authorList>
    </citation>
    <scope>FUNCTION</scope>
    <scope>DISRUPTION PHENOTYPE</scope>
    <source>
        <strain>ATCC 33909 / DSM 639 / JCM 8929 / NBRC 15157 / NCIMB 11770</strain>
    </source>
</reference>